<gene>
    <name type="primary">RASI</name>
    <name type="ordered locus">Os04g0526600</name>
    <name type="ordered locus">LOC_Os04g44470</name>
    <name type="ORF">OSJNBa0038O10.14</name>
</gene>
<feature type="signal peptide" evidence="2">
    <location>
        <begin position="1"/>
        <end position="22"/>
    </location>
</feature>
<feature type="chain" id="PRO_0000083321" description="Alpha-amylase/subtilisin inhibitor">
    <location>
        <begin position="23"/>
        <end position="200"/>
    </location>
</feature>
<feature type="site" description="Reactive bond" evidence="1">
    <location>
        <begin position="88"/>
        <end position="89"/>
    </location>
</feature>
<feature type="disulfide bond" evidence="3 5">
    <location>
        <begin position="63"/>
        <end position="112"/>
    </location>
</feature>
<feature type="disulfide bond" evidence="3 5">
    <location>
        <begin position="162"/>
        <end position="166"/>
    </location>
</feature>
<feature type="sequence conflict" description="In Ref. 8; AA sequence." evidence="4" ref="8">
    <original>VL</original>
    <variation>RVI</variation>
    <location>
        <begin position="60"/>
        <end position="61"/>
    </location>
</feature>
<feature type="sequence conflict" description="In Ref. 8; AA sequence." evidence="4" ref="8">
    <original>A</original>
    <variation>S</variation>
    <location>
        <position position="90"/>
    </location>
</feature>
<feature type="sequence conflict" description="In Ref. 8; AA sequence." evidence="4" ref="8">
    <location>
        <begin position="92"/>
        <end position="93"/>
    </location>
</feature>
<feature type="sequence conflict" description="In Ref. 8; AA sequence." evidence="4" ref="8">
    <original>I</original>
    <variation>L</variation>
    <location>
        <position position="96"/>
    </location>
</feature>
<feature type="sequence conflict" description="In Ref. 8; AA sequence." evidence="4" ref="8">
    <original>I</original>
    <variation>L</variation>
    <location>
        <position position="111"/>
    </location>
</feature>
<feature type="sequence conflict" description="In Ref. 8; AA sequence." evidence="4" ref="8">
    <original>R</original>
    <variation>GA</variation>
    <location>
        <position position="177"/>
    </location>
</feature>
<feature type="sequence conflict" description="In Ref. 8; AA sequence." evidence="4" ref="8">
    <original>L</original>
    <variation>I</variation>
    <location>
        <position position="180"/>
    </location>
</feature>
<feature type="strand" evidence="6">
    <location>
        <begin position="41"/>
        <end position="47"/>
    </location>
</feature>
<feature type="strand" evidence="6">
    <location>
        <begin position="54"/>
        <end position="57"/>
    </location>
</feature>
<feature type="strand" evidence="6">
    <location>
        <begin position="59"/>
        <end position="64"/>
    </location>
</feature>
<feature type="strand" evidence="6">
    <location>
        <begin position="66"/>
        <end position="69"/>
    </location>
</feature>
<feature type="strand" evidence="6">
    <location>
        <begin position="80"/>
        <end position="84"/>
    </location>
</feature>
<feature type="helix" evidence="6">
    <location>
        <begin position="87"/>
        <end position="89"/>
    </location>
</feature>
<feature type="strand" evidence="6">
    <location>
        <begin position="102"/>
        <end position="106"/>
    </location>
</feature>
<feature type="strand" evidence="6">
    <location>
        <begin position="130"/>
        <end position="132"/>
    </location>
</feature>
<feature type="strand" evidence="6">
    <location>
        <begin position="148"/>
        <end position="153"/>
    </location>
</feature>
<feature type="strand" evidence="6">
    <location>
        <begin position="156"/>
        <end position="161"/>
    </location>
</feature>
<feature type="strand" evidence="6">
    <location>
        <begin position="163"/>
        <end position="165"/>
    </location>
</feature>
<feature type="strand" evidence="6">
    <location>
        <begin position="167"/>
        <end position="174"/>
    </location>
</feature>
<feature type="strand" evidence="6">
    <location>
        <begin position="177"/>
        <end position="182"/>
    </location>
</feature>
<feature type="strand" evidence="6">
    <location>
        <begin position="189"/>
        <end position="193"/>
    </location>
</feature>
<name>IAAS_ORYSJ</name>
<reference key="1">
    <citation type="submission" date="2001-12" db="EMBL/GenBank/DDBJ databases">
        <title>DNA sequence of RASI and its effect on bacterial growth.</title>
        <authorList>
            <person name="Ohtsubo K."/>
            <person name="Nakamura S."/>
            <person name="Murakami Y."/>
            <person name="Hashimoto J."/>
            <person name="Kurita A."/>
            <person name="Kawasaki S."/>
        </authorList>
    </citation>
    <scope>NUCLEOTIDE SEQUENCE [GENOMIC DNA]</scope>
</reference>
<reference key="2">
    <citation type="submission" date="2002-10" db="EMBL/GenBank/DDBJ databases">
        <title>Molecular cloning and characterization of a cDNA for alpha-amylase/subtilisin inhibitor (RASI) from rice and expression of the recombinant protein.</title>
        <authorList>
            <person name="Yamagata H."/>
            <person name="Yamasaki T."/>
        </authorList>
    </citation>
    <scope>NUCLEOTIDE SEQUENCE [MRNA]</scope>
    <source>
        <strain>cv. Nipponbare</strain>
    </source>
</reference>
<reference key="3">
    <citation type="journal article" date="2002" name="Nature">
        <title>Sequence and analysis of rice chromosome 4.</title>
        <authorList>
            <person name="Feng Q."/>
            <person name="Zhang Y."/>
            <person name="Hao P."/>
            <person name="Wang S."/>
            <person name="Fu G."/>
            <person name="Huang Y."/>
            <person name="Li Y."/>
            <person name="Zhu J."/>
            <person name="Liu Y."/>
            <person name="Hu X."/>
            <person name="Jia P."/>
            <person name="Zhang Y."/>
            <person name="Zhao Q."/>
            <person name="Ying K."/>
            <person name="Yu S."/>
            <person name="Tang Y."/>
            <person name="Weng Q."/>
            <person name="Zhang L."/>
            <person name="Lu Y."/>
            <person name="Mu J."/>
            <person name="Lu Y."/>
            <person name="Zhang L.S."/>
            <person name="Yu Z."/>
            <person name="Fan D."/>
            <person name="Liu X."/>
            <person name="Lu T."/>
            <person name="Li C."/>
            <person name="Wu Y."/>
            <person name="Sun T."/>
            <person name="Lei H."/>
            <person name="Li T."/>
            <person name="Hu H."/>
            <person name="Guan J."/>
            <person name="Wu M."/>
            <person name="Zhang R."/>
            <person name="Zhou B."/>
            <person name="Chen Z."/>
            <person name="Chen L."/>
            <person name="Jin Z."/>
            <person name="Wang R."/>
            <person name="Yin H."/>
            <person name="Cai Z."/>
            <person name="Ren S."/>
            <person name="Lv G."/>
            <person name="Gu W."/>
            <person name="Zhu G."/>
            <person name="Tu Y."/>
            <person name="Jia J."/>
            <person name="Zhang Y."/>
            <person name="Chen J."/>
            <person name="Kang H."/>
            <person name="Chen X."/>
            <person name="Shao C."/>
            <person name="Sun Y."/>
            <person name="Hu Q."/>
            <person name="Zhang X."/>
            <person name="Zhang W."/>
            <person name="Wang L."/>
            <person name="Ding C."/>
            <person name="Sheng H."/>
            <person name="Gu J."/>
            <person name="Chen S."/>
            <person name="Ni L."/>
            <person name="Zhu F."/>
            <person name="Chen W."/>
            <person name="Lan L."/>
            <person name="Lai Y."/>
            <person name="Cheng Z."/>
            <person name="Gu M."/>
            <person name="Jiang J."/>
            <person name="Li J."/>
            <person name="Hong G."/>
            <person name="Xue Y."/>
            <person name="Han B."/>
        </authorList>
    </citation>
    <scope>NUCLEOTIDE SEQUENCE [LARGE SCALE GENOMIC DNA]</scope>
    <source>
        <strain>cv. Nipponbare</strain>
    </source>
</reference>
<reference key="4">
    <citation type="journal article" date="2005" name="Nature">
        <title>The map-based sequence of the rice genome.</title>
        <authorList>
            <consortium name="International rice genome sequencing project (IRGSP)"/>
        </authorList>
    </citation>
    <scope>NUCLEOTIDE SEQUENCE [LARGE SCALE GENOMIC DNA]</scope>
    <source>
        <strain>cv. Nipponbare</strain>
    </source>
</reference>
<reference key="5">
    <citation type="journal article" date="2008" name="Nucleic Acids Res.">
        <title>The rice annotation project database (RAP-DB): 2008 update.</title>
        <authorList>
            <consortium name="The rice annotation project (RAP)"/>
        </authorList>
    </citation>
    <scope>GENOME REANNOTATION</scope>
    <source>
        <strain>cv. Nipponbare</strain>
    </source>
</reference>
<reference key="6">
    <citation type="journal article" date="2013" name="Rice">
        <title>Improvement of the Oryza sativa Nipponbare reference genome using next generation sequence and optical map data.</title>
        <authorList>
            <person name="Kawahara Y."/>
            <person name="de la Bastide M."/>
            <person name="Hamilton J.P."/>
            <person name="Kanamori H."/>
            <person name="McCombie W.R."/>
            <person name="Ouyang S."/>
            <person name="Schwartz D.C."/>
            <person name="Tanaka T."/>
            <person name="Wu J."/>
            <person name="Zhou S."/>
            <person name="Childs K.L."/>
            <person name="Davidson R.M."/>
            <person name="Lin H."/>
            <person name="Quesada-Ocampo L."/>
            <person name="Vaillancourt B."/>
            <person name="Sakai H."/>
            <person name="Lee S.S."/>
            <person name="Kim J."/>
            <person name="Numa H."/>
            <person name="Itoh T."/>
            <person name="Buell C.R."/>
            <person name="Matsumoto T."/>
        </authorList>
    </citation>
    <scope>GENOME REANNOTATION</scope>
    <source>
        <strain>cv. Nipponbare</strain>
    </source>
</reference>
<reference key="7">
    <citation type="journal article" date="2003" name="Science">
        <title>Collection, mapping, and annotation of over 28,000 cDNA clones from japonica rice.</title>
        <authorList>
            <consortium name="The rice full-length cDNA consortium"/>
        </authorList>
    </citation>
    <scope>NUCLEOTIDE SEQUENCE [LARGE SCALE MRNA]</scope>
    <source>
        <strain>cv. Nipponbare</strain>
    </source>
</reference>
<reference key="8">
    <citation type="journal article" date="1992" name="FEBS Lett.">
        <title>The amino acid sequence of a 20 kDa bifunctional subtilisin/alpha-amylase inhibitor from bran of rice (Oryza sativa L.) seeds.</title>
        <authorList>
            <person name="Ohtsubo K."/>
            <person name="Richardson M."/>
        </authorList>
    </citation>
    <scope>PROTEIN SEQUENCE OF 23-198</scope>
    <source>
        <tissue>Seed</tissue>
    </source>
</reference>
<reference key="9">
    <citation type="submission" date="2007-07" db="PDB data bank">
        <title>Structure and function study of rice bifunctional alpha-amylase/subtilisin inhibitor from Oryza sativa.</title>
        <authorList>
            <person name="Peng W.Y."/>
            <person name="Lin Y.H."/>
            <person name="Huang Y.C."/>
            <person name="Guan H.H."/>
            <person name="Hsieh Y.C."/>
            <person name="Liu M.Y."/>
            <person name="Chang T."/>
            <person name="Chen C.J."/>
        </authorList>
    </citation>
    <scope>X-RAY CRYSTALLOGRAPHY (1.80 ANGSTROMS)</scope>
    <scope>DISULFIDE BONDS</scope>
</reference>
<dbReference type="EMBL" id="AB075524">
    <property type="protein sequence ID" value="BAB78730.1"/>
    <property type="molecule type" value="Genomic_DNA"/>
</dbReference>
<dbReference type="EMBL" id="AY166458">
    <property type="protein sequence ID" value="AAN86549.1"/>
    <property type="molecule type" value="mRNA"/>
</dbReference>
<dbReference type="EMBL" id="AL663019">
    <property type="protein sequence ID" value="CAE05648.2"/>
    <property type="molecule type" value="Genomic_DNA"/>
</dbReference>
<dbReference type="EMBL" id="AP008210">
    <property type="protein sequence ID" value="BAF15277.1"/>
    <property type="molecule type" value="Genomic_DNA"/>
</dbReference>
<dbReference type="EMBL" id="AP014960">
    <property type="protein sequence ID" value="BAS90170.1"/>
    <property type="molecule type" value="Genomic_DNA"/>
</dbReference>
<dbReference type="EMBL" id="AK106723">
    <property type="protein sequence ID" value="BAG97809.1"/>
    <property type="molecule type" value="mRNA"/>
</dbReference>
<dbReference type="EMBL" id="AY166459">
    <property type="protein sequence ID" value="AAN86550.1"/>
    <property type="molecule type" value="Genomic_DNA"/>
</dbReference>
<dbReference type="PIR" id="S24131">
    <property type="entry name" value="S24131"/>
</dbReference>
<dbReference type="RefSeq" id="XP_015634500.1">
    <property type="nucleotide sequence ID" value="XM_015779014.1"/>
</dbReference>
<dbReference type="PDB" id="2QN4">
    <property type="method" value="X-ray"/>
    <property type="resolution" value="1.80 A"/>
    <property type="chains" value="A/B=1-200"/>
</dbReference>
<dbReference type="PDBsum" id="2QN4"/>
<dbReference type="SMR" id="P29421"/>
<dbReference type="FunCoup" id="P29421">
    <property type="interactions" value="1175"/>
</dbReference>
<dbReference type="STRING" id="39947.P29421"/>
<dbReference type="MEROPS" id="I03.004"/>
<dbReference type="PaxDb" id="39947-P29421"/>
<dbReference type="EnsemblPlants" id="Os04t0526600-01">
    <property type="protein sequence ID" value="Os04t0526600-01"/>
    <property type="gene ID" value="Os04g0526600"/>
</dbReference>
<dbReference type="Gramene" id="Os04t0526600-01">
    <property type="protein sequence ID" value="Os04t0526600-01"/>
    <property type="gene ID" value="Os04g0526600"/>
</dbReference>
<dbReference type="KEGG" id="dosa:Os04g0526600"/>
<dbReference type="eggNOG" id="ENOG502S0PJ">
    <property type="taxonomic scope" value="Eukaryota"/>
</dbReference>
<dbReference type="HOGENOM" id="CLU_090145_0_0_1"/>
<dbReference type="InParanoid" id="P29421"/>
<dbReference type="OMA" id="DLNIVFF"/>
<dbReference type="OrthoDB" id="1918435at2759"/>
<dbReference type="EvolutionaryTrace" id="P29421"/>
<dbReference type="Proteomes" id="UP000000763">
    <property type="component" value="Chromosome 4"/>
</dbReference>
<dbReference type="Proteomes" id="UP000059680">
    <property type="component" value="Chromosome 4"/>
</dbReference>
<dbReference type="GO" id="GO:0015066">
    <property type="term" value="F:alpha-amylase inhibitor activity"/>
    <property type="evidence" value="ECO:0000314"/>
    <property type="project" value="Gramene"/>
</dbReference>
<dbReference type="GO" id="GO:0004867">
    <property type="term" value="F:serine-type endopeptidase inhibitor activity"/>
    <property type="evidence" value="ECO:0000314"/>
    <property type="project" value="Gramene"/>
</dbReference>
<dbReference type="CDD" id="cd23373">
    <property type="entry name" value="beta-trefoil_STI_ASI"/>
    <property type="match status" value="1"/>
</dbReference>
<dbReference type="FunFam" id="2.80.10.50:FF:000083">
    <property type="entry name" value="Alpha-amylase/subtilisin inhibitor"/>
    <property type="match status" value="1"/>
</dbReference>
<dbReference type="Gene3D" id="2.80.10.50">
    <property type="match status" value="1"/>
</dbReference>
<dbReference type="InterPro" id="IPR011065">
    <property type="entry name" value="Kunitz_inhibitor_STI-like_sf"/>
</dbReference>
<dbReference type="InterPro" id="IPR002160">
    <property type="entry name" value="Prot_inh_Kunz-lg"/>
</dbReference>
<dbReference type="PANTHER" id="PTHR33107">
    <property type="entry name" value="KUNITZ TRYPSIN INHIBITOR 2"/>
    <property type="match status" value="1"/>
</dbReference>
<dbReference type="PANTHER" id="PTHR33107:SF5">
    <property type="entry name" value="KUNITZ TRYPSIN INHIBITOR 5"/>
    <property type="match status" value="1"/>
</dbReference>
<dbReference type="Pfam" id="PF00197">
    <property type="entry name" value="Kunitz_legume"/>
    <property type="match status" value="1"/>
</dbReference>
<dbReference type="PRINTS" id="PR00291">
    <property type="entry name" value="KUNITZINHBTR"/>
</dbReference>
<dbReference type="SMART" id="SM00452">
    <property type="entry name" value="STI"/>
    <property type="match status" value="1"/>
</dbReference>
<dbReference type="SUPFAM" id="SSF50386">
    <property type="entry name" value="STI-like"/>
    <property type="match status" value="1"/>
</dbReference>
<dbReference type="PROSITE" id="PS00283">
    <property type="entry name" value="SOYBEAN_KUNITZ"/>
    <property type="match status" value="1"/>
</dbReference>
<accession>P29421</accession>
<accession>Q0JBL0</accession>
<accession>Q7XKJ3</accession>
<accession>Q8GRN7</accession>
<accession>Q8W3L5</accession>
<organism>
    <name type="scientific">Oryza sativa subsp. japonica</name>
    <name type="common">Rice</name>
    <dbReference type="NCBI Taxonomy" id="39947"/>
    <lineage>
        <taxon>Eukaryota</taxon>
        <taxon>Viridiplantae</taxon>
        <taxon>Streptophyta</taxon>
        <taxon>Embryophyta</taxon>
        <taxon>Tracheophyta</taxon>
        <taxon>Spermatophyta</taxon>
        <taxon>Magnoliopsida</taxon>
        <taxon>Liliopsida</taxon>
        <taxon>Poales</taxon>
        <taxon>Poaceae</taxon>
        <taxon>BOP clade</taxon>
        <taxon>Oryzoideae</taxon>
        <taxon>Oryzeae</taxon>
        <taxon>Oryzinae</taxon>
        <taxon>Oryza</taxon>
        <taxon>Oryza sativa</taxon>
    </lineage>
</organism>
<proteinExistence type="evidence at protein level"/>
<sequence length="200" mass="21417">MVSLRLPLILLSLLAISFSCSAAPPPVYDTEGHELSADGSYYVLPASPGHGGGLTMAPRVLPCPLLVAQETDERRKGFPVRFTPWGGAAAPEDRTIRVSTDVRIRFNAATICVQSTEWHVGDEPLTGARRVVTGPLIGPSPSGRENAFRVEKYGGGYKLVSCRDSCQDLGVSRDGARAWLGASQPPHVVVFKKARPSPPE</sequence>
<evidence type="ECO:0000250" key="1"/>
<evidence type="ECO:0000269" key="2">
    <source>
    </source>
</evidence>
<evidence type="ECO:0000269" key="3">
    <source ref="9"/>
</evidence>
<evidence type="ECO:0000305" key="4"/>
<evidence type="ECO:0007744" key="5">
    <source>
        <dbReference type="PDB" id="2QN4"/>
    </source>
</evidence>
<evidence type="ECO:0007829" key="6">
    <source>
        <dbReference type="PDB" id="2QN4"/>
    </source>
</evidence>
<comment type="function">
    <text>This protein inhibits independently subtilisin and T.castaneum alpha-amylase but not barley alpha-amylase.</text>
</comment>
<comment type="similarity">
    <text evidence="4">Belongs to the protease inhibitor I3 (leguminous Kunitz-type inhibitor) family.</text>
</comment>
<protein>
    <recommendedName>
        <fullName>Alpha-amylase/subtilisin inhibitor</fullName>
    </recommendedName>
    <alternativeName>
        <fullName>RASI</fullName>
    </alternativeName>
</protein>
<keyword id="KW-0002">3D-structure</keyword>
<keyword id="KW-0022">Alpha-amylase inhibitor</keyword>
<keyword id="KW-0903">Direct protein sequencing</keyword>
<keyword id="KW-1015">Disulfide bond</keyword>
<keyword id="KW-0646">Protease inhibitor</keyword>
<keyword id="KW-1185">Reference proteome</keyword>
<keyword id="KW-0722">Serine protease inhibitor</keyword>
<keyword id="KW-0732">Signal</keyword>